<evidence type="ECO:0000250" key="1"/>
<evidence type="ECO:0000305" key="2"/>
<accession>P06357</accession>
<dbReference type="EMBL" id="Z00044">
    <property type="protein sequence ID" value="CAA77381.1"/>
    <property type="molecule type" value="Genomic_DNA"/>
</dbReference>
<dbReference type="PIR" id="A02702">
    <property type="entry name" value="R3NT3"/>
</dbReference>
<dbReference type="RefSeq" id="NP_054537.1">
    <property type="nucleotide sequence ID" value="NC_001879.2"/>
</dbReference>
<dbReference type="SMR" id="P06357"/>
<dbReference type="GeneID" id="800454"/>
<dbReference type="KEGG" id="nta:800454"/>
<dbReference type="OMA" id="WFAQPKK"/>
<dbReference type="OrthoDB" id="1842609at2759"/>
<dbReference type="Proteomes" id="UP000084051">
    <property type="component" value="Unplaced"/>
</dbReference>
<dbReference type="GO" id="GO:0009507">
    <property type="term" value="C:chloroplast"/>
    <property type="evidence" value="ECO:0007669"/>
    <property type="project" value="UniProtKB-SubCell"/>
</dbReference>
<dbReference type="GO" id="GO:1990904">
    <property type="term" value="C:ribonucleoprotein complex"/>
    <property type="evidence" value="ECO:0007669"/>
    <property type="project" value="UniProtKB-KW"/>
</dbReference>
<dbReference type="GO" id="GO:0005840">
    <property type="term" value="C:ribosome"/>
    <property type="evidence" value="ECO:0007669"/>
    <property type="project" value="UniProtKB-KW"/>
</dbReference>
<dbReference type="GO" id="GO:0019843">
    <property type="term" value="F:rRNA binding"/>
    <property type="evidence" value="ECO:0007669"/>
    <property type="project" value="UniProtKB-UniRule"/>
</dbReference>
<dbReference type="GO" id="GO:0003735">
    <property type="term" value="F:structural constituent of ribosome"/>
    <property type="evidence" value="ECO:0007669"/>
    <property type="project" value="InterPro"/>
</dbReference>
<dbReference type="GO" id="GO:0006412">
    <property type="term" value="P:translation"/>
    <property type="evidence" value="ECO:0007669"/>
    <property type="project" value="UniProtKB-UniRule"/>
</dbReference>
<dbReference type="CDD" id="cd02412">
    <property type="entry name" value="KH-II_30S_S3"/>
    <property type="match status" value="1"/>
</dbReference>
<dbReference type="FunFam" id="3.30.1140.32:FF:000003">
    <property type="entry name" value="30S ribosomal protein S3, chloroplastic"/>
    <property type="match status" value="1"/>
</dbReference>
<dbReference type="FunFam" id="3.30.300.20:FF:000008">
    <property type="entry name" value="30S ribosomal protein S3, chloroplastic"/>
    <property type="match status" value="1"/>
</dbReference>
<dbReference type="Gene3D" id="3.30.300.20">
    <property type="match status" value="1"/>
</dbReference>
<dbReference type="Gene3D" id="3.30.1140.32">
    <property type="entry name" value="Ribosomal protein S3, C-terminal domain"/>
    <property type="match status" value="1"/>
</dbReference>
<dbReference type="HAMAP" id="MF_01309_B">
    <property type="entry name" value="Ribosomal_uS3_B"/>
    <property type="match status" value="1"/>
</dbReference>
<dbReference type="InterPro" id="IPR015946">
    <property type="entry name" value="KH_dom-like_a/b"/>
</dbReference>
<dbReference type="InterPro" id="IPR004044">
    <property type="entry name" value="KH_dom_type_2"/>
</dbReference>
<dbReference type="InterPro" id="IPR009019">
    <property type="entry name" value="KH_sf_prok-type"/>
</dbReference>
<dbReference type="InterPro" id="IPR036419">
    <property type="entry name" value="Ribosomal_S3_C_sf"/>
</dbReference>
<dbReference type="InterPro" id="IPR005704">
    <property type="entry name" value="Ribosomal_uS3_bac-typ"/>
</dbReference>
<dbReference type="InterPro" id="IPR001351">
    <property type="entry name" value="Ribosomal_uS3_C"/>
</dbReference>
<dbReference type="InterPro" id="IPR018280">
    <property type="entry name" value="Ribosomal_uS3_CS"/>
</dbReference>
<dbReference type="NCBIfam" id="TIGR01009">
    <property type="entry name" value="rpsC_bact"/>
    <property type="match status" value="1"/>
</dbReference>
<dbReference type="PANTHER" id="PTHR11760">
    <property type="entry name" value="30S/40S RIBOSOMAL PROTEIN S3"/>
    <property type="match status" value="1"/>
</dbReference>
<dbReference type="PANTHER" id="PTHR11760:SF19">
    <property type="entry name" value="SMALL RIBOSOMAL SUBUNIT PROTEIN US3C"/>
    <property type="match status" value="1"/>
</dbReference>
<dbReference type="Pfam" id="PF00189">
    <property type="entry name" value="Ribosomal_S3_C"/>
    <property type="match status" value="1"/>
</dbReference>
<dbReference type="SUPFAM" id="SSF54814">
    <property type="entry name" value="Prokaryotic type KH domain (KH-domain type II)"/>
    <property type="match status" value="1"/>
</dbReference>
<dbReference type="SUPFAM" id="SSF54821">
    <property type="entry name" value="Ribosomal protein S3 C-terminal domain"/>
    <property type="match status" value="1"/>
</dbReference>
<dbReference type="PROSITE" id="PS50823">
    <property type="entry name" value="KH_TYPE_2"/>
    <property type="match status" value="1"/>
</dbReference>
<dbReference type="PROSITE" id="PS00548">
    <property type="entry name" value="RIBOSOMAL_S3"/>
    <property type="match status" value="1"/>
</dbReference>
<keyword id="KW-0150">Chloroplast</keyword>
<keyword id="KW-0934">Plastid</keyword>
<keyword id="KW-1185">Reference proteome</keyword>
<keyword id="KW-0687">Ribonucleoprotein</keyword>
<keyword id="KW-0689">Ribosomal protein</keyword>
<keyword id="KW-0694">RNA-binding</keyword>
<keyword id="KW-0699">rRNA-binding</keyword>
<organism>
    <name type="scientific">Nicotiana tabacum</name>
    <name type="common">Common tobacco</name>
    <dbReference type="NCBI Taxonomy" id="4097"/>
    <lineage>
        <taxon>Eukaryota</taxon>
        <taxon>Viridiplantae</taxon>
        <taxon>Streptophyta</taxon>
        <taxon>Embryophyta</taxon>
        <taxon>Tracheophyta</taxon>
        <taxon>Spermatophyta</taxon>
        <taxon>Magnoliopsida</taxon>
        <taxon>eudicotyledons</taxon>
        <taxon>Gunneridae</taxon>
        <taxon>Pentapetalae</taxon>
        <taxon>asterids</taxon>
        <taxon>lamiids</taxon>
        <taxon>Solanales</taxon>
        <taxon>Solanaceae</taxon>
        <taxon>Nicotianoideae</taxon>
        <taxon>Nicotianeae</taxon>
        <taxon>Nicotiana</taxon>
    </lineage>
</organism>
<reference key="1">
    <citation type="journal article" date="1986" name="EMBO J.">
        <title>The complete nucleotide sequence of the tobacco chloroplast genome: its gene organization and expression.</title>
        <authorList>
            <person name="Shinozaki K."/>
            <person name="Ohme M."/>
            <person name="Tanaka M."/>
            <person name="Wakasugi T."/>
            <person name="Hayashida N."/>
            <person name="Matsubayashi T."/>
            <person name="Zaita N."/>
            <person name="Chunwongse J."/>
            <person name="Obokata J."/>
            <person name="Yamaguchi-Shinozaki K."/>
            <person name="Ohto C."/>
            <person name="Torazawa K."/>
            <person name="Meng B.-Y."/>
            <person name="Sugita M."/>
            <person name="Deno H."/>
            <person name="Kamogashira T."/>
            <person name="Yamada K."/>
            <person name="Kusuda J."/>
            <person name="Takaiwa F."/>
            <person name="Kato A."/>
            <person name="Tohdoh N."/>
            <person name="Shimada H."/>
            <person name="Sugiura M."/>
        </authorList>
    </citation>
    <scope>NUCLEOTIDE SEQUENCE [LARGE SCALE GENOMIC DNA]</scope>
    <source>
        <strain>cv. Bright Yellow 4</strain>
    </source>
</reference>
<reference key="2">
    <citation type="journal article" date="1986" name="Proc. Natl. Acad. Sci. U.S.A.">
        <title>Genes for the eight ribosomal proteins are clustered on the chloroplast genome of tobacco (Nicotiana tabacum): similarity to the S10 and spc operons of Escherichia coli.</title>
        <authorList>
            <person name="Tanaka M."/>
            <person name="Wakasugi T."/>
            <person name="Sugita M."/>
            <person name="Shinozaki K."/>
            <person name="Sugiura M."/>
        </authorList>
    </citation>
    <scope>NUCLEOTIDE SEQUENCE [GENOMIC DNA]</scope>
</reference>
<comment type="subunit">
    <text evidence="1">Part of the 30S ribosomal subunit.</text>
</comment>
<comment type="subcellular location">
    <subcellularLocation>
        <location>Plastid</location>
        <location>Chloroplast</location>
    </subcellularLocation>
</comment>
<comment type="similarity">
    <text evidence="2">Belongs to the universal ribosomal protein uS3 family.</text>
</comment>
<gene>
    <name type="primary">rps3</name>
</gene>
<sequence length="218" mass="25085">MGQKINPLGFRLGTTQGHHSLWFSQPKNYSEGLQEDQKIRDCIKNYVQKNMRTSSGVEGIARIEIQKRIDLIQVIIFMGFPKLLIESRPRGIEELQTTLQKEFHCVNRKLNIAVTRIAKPYGNPNILAEFIAGQLKNRVSFRKAMKKAIELTEQADTKGIQIQIAGRIDGKEIARVEWIREGRVPLQTIRAKIDYCSYTVRTIYGVLGIKIWIFLDEE</sequence>
<geneLocation type="chloroplast"/>
<protein>
    <recommendedName>
        <fullName evidence="2">Small ribosomal subunit protein uS3c</fullName>
    </recommendedName>
    <alternativeName>
        <fullName>30S ribosomal protein S3, chloroplastic</fullName>
    </alternativeName>
</protein>
<feature type="chain" id="PRO_0000130308" description="Small ribosomal subunit protein uS3c">
    <location>
        <begin position="1"/>
        <end position="218"/>
    </location>
</feature>
<feature type="domain" description="KH type-2">
    <location>
        <begin position="47"/>
        <end position="118"/>
    </location>
</feature>
<name>RR3_TOBAC</name>
<proteinExistence type="inferred from homology"/>